<evidence type="ECO:0000250" key="1"/>
<evidence type="ECO:0000305" key="2"/>
<proteinExistence type="inferred from homology"/>
<comment type="function">
    <text evidence="1">Catalyzes the two-electron reduction of the C2 and C3(1) diene system of 15,16-dihydrobiliverdin.</text>
</comment>
<comment type="catalytic activity">
    <reaction>
        <text>(3Z)-phycoerythrobilin + oxidized 2[4Fe-4S]-[ferredoxin] = 15,16-dihydrobiliverdin + reduced 2[4Fe-4S]-[ferredoxin] + 2 H(+)</text>
        <dbReference type="Rhea" id="RHEA:22092"/>
        <dbReference type="Rhea" id="RHEA-COMP:10002"/>
        <dbReference type="Rhea" id="RHEA-COMP:10004"/>
        <dbReference type="ChEBI" id="CHEBI:15378"/>
        <dbReference type="ChEBI" id="CHEBI:33722"/>
        <dbReference type="ChEBI" id="CHEBI:33723"/>
        <dbReference type="ChEBI" id="CHEBI:57438"/>
        <dbReference type="ChEBI" id="CHEBI:57899"/>
        <dbReference type="EC" id="1.3.7.3"/>
    </reaction>
</comment>
<comment type="similarity">
    <text evidence="2">Belongs to the HY2 family.</text>
</comment>
<protein>
    <recommendedName>
        <fullName>Phycoerythrobilin:ferredoxin oxidoreductase</fullName>
        <ecNumber>1.3.7.3</ecNumber>
    </recommendedName>
</protein>
<dbReference type="EC" id="1.3.7.3"/>
<dbReference type="EMBL" id="BA000045">
    <property type="protein sequence ID" value="BAC89202.1"/>
    <property type="molecule type" value="Genomic_DNA"/>
</dbReference>
<dbReference type="RefSeq" id="NP_924207.1">
    <property type="nucleotide sequence ID" value="NC_005125.1"/>
</dbReference>
<dbReference type="RefSeq" id="WP_011141261.1">
    <property type="nucleotide sequence ID" value="NC_005125.1"/>
</dbReference>
<dbReference type="SMR" id="Q7NL65"/>
<dbReference type="STRING" id="251221.gene:10758742"/>
<dbReference type="EnsemblBacteria" id="BAC89202">
    <property type="protein sequence ID" value="BAC89202"/>
    <property type="gene ID" value="BAC89202"/>
</dbReference>
<dbReference type="KEGG" id="gvi:glr1261"/>
<dbReference type="PATRIC" id="fig|251221.4.peg.1283"/>
<dbReference type="eggNOG" id="ENOG502Z8GK">
    <property type="taxonomic scope" value="Bacteria"/>
</dbReference>
<dbReference type="HOGENOM" id="CLU_086208_1_0_3"/>
<dbReference type="InParanoid" id="Q7NL65"/>
<dbReference type="OrthoDB" id="421401at2"/>
<dbReference type="PhylomeDB" id="Q7NL65"/>
<dbReference type="Proteomes" id="UP000000557">
    <property type="component" value="Chromosome"/>
</dbReference>
<dbReference type="GO" id="GO:0050897">
    <property type="term" value="F:cobalt ion binding"/>
    <property type="evidence" value="ECO:0007669"/>
    <property type="project" value="InterPro"/>
</dbReference>
<dbReference type="GO" id="GO:0050618">
    <property type="term" value="F:phycoerythrobilin:ferredoxin oxidoreductase activity"/>
    <property type="evidence" value="ECO:0007669"/>
    <property type="project" value="UniProtKB-UniRule"/>
</dbReference>
<dbReference type="GO" id="GO:0010024">
    <property type="term" value="P:phytochromobilin biosynthetic process"/>
    <property type="evidence" value="ECO:0007669"/>
    <property type="project" value="InterPro"/>
</dbReference>
<dbReference type="Gene3D" id="3.40.1500.20">
    <property type="match status" value="1"/>
</dbReference>
<dbReference type="HAMAP" id="MF_00793">
    <property type="entry name" value="PebB"/>
    <property type="match status" value="1"/>
</dbReference>
<dbReference type="InterPro" id="IPR009249">
    <property type="entry name" value="Ferredoxin-dep_bilin_Rdtase"/>
</dbReference>
<dbReference type="InterPro" id="IPR022827">
    <property type="entry name" value="Phycoerythrobilin_Fdx_Rdtase"/>
</dbReference>
<dbReference type="NCBIfam" id="NF009723">
    <property type="entry name" value="PRK13250.1"/>
    <property type="match status" value="1"/>
</dbReference>
<dbReference type="PANTHER" id="PTHR34557">
    <property type="entry name" value="PHYTOCHROMOBILIN:FERREDOXIN OXIDOREDUCTASE, CHLOROPLASTIC"/>
    <property type="match status" value="1"/>
</dbReference>
<dbReference type="PANTHER" id="PTHR34557:SF1">
    <property type="entry name" value="PHYTOCHROMOBILIN:FERREDOXIN OXIDOREDUCTASE, CHLOROPLASTIC"/>
    <property type="match status" value="1"/>
</dbReference>
<dbReference type="Pfam" id="PF05996">
    <property type="entry name" value="Fe_bilin_red"/>
    <property type="match status" value="1"/>
</dbReference>
<feature type="chain" id="PRO_0000216731" description="Phycoerythrobilin:ferredoxin oxidoreductase">
    <location>
        <begin position="1"/>
        <end position="245"/>
    </location>
</feature>
<gene>
    <name type="primary">pebB</name>
    <name type="ordered locus">glr1261</name>
</gene>
<accession>Q7NL65</accession>
<reference key="1">
    <citation type="journal article" date="2003" name="DNA Res.">
        <title>Complete genome structure of Gloeobacter violaceus PCC 7421, a cyanobacterium that lacks thylakoids.</title>
        <authorList>
            <person name="Nakamura Y."/>
            <person name="Kaneko T."/>
            <person name="Sato S."/>
            <person name="Mimuro M."/>
            <person name="Miyashita H."/>
            <person name="Tsuchiya T."/>
            <person name="Sasamoto S."/>
            <person name="Watanabe A."/>
            <person name="Kawashima K."/>
            <person name="Kishida Y."/>
            <person name="Kiyokawa C."/>
            <person name="Kohara M."/>
            <person name="Matsumoto M."/>
            <person name="Matsuno A."/>
            <person name="Nakazaki N."/>
            <person name="Shimpo S."/>
            <person name="Takeuchi C."/>
            <person name="Yamada M."/>
            <person name="Tabata S."/>
        </authorList>
    </citation>
    <scope>NUCLEOTIDE SEQUENCE [LARGE SCALE GENOMIC DNA]</scope>
    <source>
        <strain>ATCC 29082 / PCC 7421</strain>
    </source>
</reference>
<name>PEBB_GLOVI</name>
<sequence length="245" mass="28333">MTLYEPFLERAQQVLTRRLELAPYPIPVGFERKEALVRGEAVVTTSTAWQSPKLRQIRAAHVQGGGALQVLNFVISPRLEYDLPFFGADLVTLPGGHLIALDMQPLFRDDPAYQAKYTEPIVPLFEAHRAHLEWGGDFPEEARPFFSPAFLWTRPKETGTVETRVFAAFVDYLNAYLDFVERAEPVTHPEGLAAVERAQLRYLHYRAEKDPARGMFRRFYGPEWTEEYIHGFLFDLERRREAVHR</sequence>
<keyword id="KW-0560">Oxidoreductase</keyword>
<keyword id="KW-1185">Reference proteome</keyword>
<organism>
    <name type="scientific">Gloeobacter violaceus (strain ATCC 29082 / PCC 7421)</name>
    <dbReference type="NCBI Taxonomy" id="251221"/>
    <lineage>
        <taxon>Bacteria</taxon>
        <taxon>Bacillati</taxon>
        <taxon>Cyanobacteriota</taxon>
        <taxon>Cyanophyceae</taxon>
        <taxon>Gloeobacterales</taxon>
        <taxon>Gloeobacteraceae</taxon>
        <taxon>Gloeobacter</taxon>
    </lineage>
</organism>